<organism>
    <name type="scientific">Brucella suis biovar 1 (strain 1330)</name>
    <dbReference type="NCBI Taxonomy" id="204722"/>
    <lineage>
        <taxon>Bacteria</taxon>
        <taxon>Pseudomonadati</taxon>
        <taxon>Pseudomonadota</taxon>
        <taxon>Alphaproteobacteria</taxon>
        <taxon>Hyphomicrobiales</taxon>
        <taxon>Brucellaceae</taxon>
        <taxon>Brucella/Ochrobactrum group</taxon>
        <taxon>Brucella</taxon>
    </lineage>
</organism>
<sequence>MPDTAPQLRLYNTLTRTKEAFAPIDAKNVRMYVCGPTVYDFAHIGNARPVIVFDVLFRLLRHVYGAQHVTYARNITDVDDKINARAARDYPDLPFNEAIRKVTESTNAQFQADVTALGNLQPTVQPRATEHMDEMRAMIDRLVQRGVAYVAQDHVLFSPSAMNARKGPRYGALARRSLDEMLAGARVDVASYKRDEMDFVLWKPSKKGEPGWPSPAGIETLGRPGWHIECSAMSMAKLLEPFGGGLKCDDPERNQFDIHGGGIDLVFPHHENEIAQSCCALGTERMANIWMHNGFLQVEGQKMSKSLGNFITIRDVLNDGLPQLGEWGDNTVRDRWAGLAARLSMLQTHYREPINWTAQRLAESADELHRWYGLLRDEGFGAPEKLSHASAVAAALCDDLNSWAAITALRQAFKVRDVAALGEGMALMGLLDPYFVTASDVPIFARADVDASAIAARIAERLNFINAKNWAEADRIRDELLQEGVQLKDSKDPATGERITTWDVVG</sequence>
<reference key="1">
    <citation type="journal article" date="2002" name="Proc. Natl. Acad. Sci. U.S.A.">
        <title>The Brucella suis genome reveals fundamental similarities between animal and plant pathogens and symbionts.</title>
        <authorList>
            <person name="Paulsen I.T."/>
            <person name="Seshadri R."/>
            <person name="Nelson K.E."/>
            <person name="Eisen J.A."/>
            <person name="Heidelberg J.F."/>
            <person name="Read T.D."/>
            <person name="Dodson R.J."/>
            <person name="Umayam L.A."/>
            <person name="Brinkac L.M."/>
            <person name="Beanan M.J."/>
            <person name="Daugherty S.C."/>
            <person name="DeBoy R.T."/>
            <person name="Durkin A.S."/>
            <person name="Kolonay J.F."/>
            <person name="Madupu R."/>
            <person name="Nelson W.C."/>
            <person name="Ayodeji B."/>
            <person name="Kraul M."/>
            <person name="Shetty J."/>
            <person name="Malek J.A."/>
            <person name="Van Aken S.E."/>
            <person name="Riedmuller S."/>
            <person name="Tettelin H."/>
            <person name="Gill S.R."/>
            <person name="White O."/>
            <person name="Salzberg S.L."/>
            <person name="Hoover D.L."/>
            <person name="Lindler L.E."/>
            <person name="Halling S.M."/>
            <person name="Boyle S.M."/>
            <person name="Fraser C.M."/>
        </authorList>
    </citation>
    <scope>NUCLEOTIDE SEQUENCE [LARGE SCALE GENOMIC DNA]</scope>
    <source>
        <strain>1330</strain>
    </source>
</reference>
<reference key="2">
    <citation type="journal article" date="2011" name="J. Bacteriol.">
        <title>Revised genome sequence of Brucella suis 1330.</title>
        <authorList>
            <person name="Tae H."/>
            <person name="Shallom S."/>
            <person name="Settlage R."/>
            <person name="Preston D."/>
            <person name="Adams L.G."/>
            <person name="Garner H.R."/>
        </authorList>
    </citation>
    <scope>NUCLEOTIDE SEQUENCE [LARGE SCALE GENOMIC DNA]</scope>
    <source>
        <strain>1330</strain>
    </source>
</reference>
<evidence type="ECO:0000255" key="1">
    <source>
        <dbReference type="HAMAP-Rule" id="MF_00041"/>
    </source>
</evidence>
<proteinExistence type="inferred from homology"/>
<dbReference type="EC" id="6.1.1.16" evidence="1"/>
<dbReference type="EMBL" id="AE014291">
    <property type="protein sequence ID" value="AAN29606.1"/>
    <property type="molecule type" value="Genomic_DNA"/>
</dbReference>
<dbReference type="EMBL" id="CP002997">
    <property type="protein sequence ID" value="AEM18023.1"/>
    <property type="molecule type" value="Genomic_DNA"/>
</dbReference>
<dbReference type="RefSeq" id="WP_004688175.1">
    <property type="nucleotide sequence ID" value="NZ_KN046804.1"/>
</dbReference>
<dbReference type="SMR" id="Q8G1N5"/>
<dbReference type="GeneID" id="55590401"/>
<dbReference type="KEGG" id="bms:BR0677"/>
<dbReference type="KEGG" id="bsi:BS1330_I0673"/>
<dbReference type="PATRIC" id="fig|204722.21.peg.1499"/>
<dbReference type="HOGENOM" id="CLU_013528_0_1_5"/>
<dbReference type="PhylomeDB" id="Q8G1N5"/>
<dbReference type="Proteomes" id="UP000007104">
    <property type="component" value="Chromosome I"/>
</dbReference>
<dbReference type="GO" id="GO:0005829">
    <property type="term" value="C:cytosol"/>
    <property type="evidence" value="ECO:0007669"/>
    <property type="project" value="TreeGrafter"/>
</dbReference>
<dbReference type="GO" id="GO:0005524">
    <property type="term" value="F:ATP binding"/>
    <property type="evidence" value="ECO:0007669"/>
    <property type="project" value="UniProtKB-UniRule"/>
</dbReference>
<dbReference type="GO" id="GO:0004817">
    <property type="term" value="F:cysteine-tRNA ligase activity"/>
    <property type="evidence" value="ECO:0007669"/>
    <property type="project" value="UniProtKB-UniRule"/>
</dbReference>
<dbReference type="GO" id="GO:0008270">
    <property type="term" value="F:zinc ion binding"/>
    <property type="evidence" value="ECO:0007669"/>
    <property type="project" value="UniProtKB-UniRule"/>
</dbReference>
<dbReference type="GO" id="GO:0006423">
    <property type="term" value="P:cysteinyl-tRNA aminoacylation"/>
    <property type="evidence" value="ECO:0007669"/>
    <property type="project" value="UniProtKB-UniRule"/>
</dbReference>
<dbReference type="CDD" id="cd00672">
    <property type="entry name" value="CysRS_core"/>
    <property type="match status" value="1"/>
</dbReference>
<dbReference type="Gene3D" id="1.20.120.1910">
    <property type="entry name" value="Cysteine-tRNA ligase, C-terminal anti-codon recognition domain"/>
    <property type="match status" value="1"/>
</dbReference>
<dbReference type="Gene3D" id="3.40.50.620">
    <property type="entry name" value="HUPs"/>
    <property type="match status" value="1"/>
</dbReference>
<dbReference type="HAMAP" id="MF_00041">
    <property type="entry name" value="Cys_tRNA_synth"/>
    <property type="match status" value="1"/>
</dbReference>
<dbReference type="InterPro" id="IPR015803">
    <property type="entry name" value="Cys-tRNA-ligase"/>
</dbReference>
<dbReference type="InterPro" id="IPR024909">
    <property type="entry name" value="Cys-tRNA/MSH_ligase"/>
</dbReference>
<dbReference type="InterPro" id="IPR014729">
    <property type="entry name" value="Rossmann-like_a/b/a_fold"/>
</dbReference>
<dbReference type="InterPro" id="IPR032678">
    <property type="entry name" value="tRNA-synt_1_cat_dom"/>
</dbReference>
<dbReference type="InterPro" id="IPR009080">
    <property type="entry name" value="tRNAsynth_Ia_anticodon-bd"/>
</dbReference>
<dbReference type="NCBIfam" id="TIGR00435">
    <property type="entry name" value="cysS"/>
    <property type="match status" value="1"/>
</dbReference>
<dbReference type="PANTHER" id="PTHR10890:SF3">
    <property type="entry name" value="CYSTEINE--TRNA LIGASE, CYTOPLASMIC"/>
    <property type="match status" value="1"/>
</dbReference>
<dbReference type="PANTHER" id="PTHR10890">
    <property type="entry name" value="CYSTEINYL-TRNA SYNTHETASE"/>
    <property type="match status" value="1"/>
</dbReference>
<dbReference type="Pfam" id="PF01406">
    <property type="entry name" value="tRNA-synt_1e"/>
    <property type="match status" value="1"/>
</dbReference>
<dbReference type="PRINTS" id="PR00983">
    <property type="entry name" value="TRNASYNTHCYS"/>
</dbReference>
<dbReference type="SUPFAM" id="SSF47323">
    <property type="entry name" value="Anticodon-binding domain of a subclass of class I aminoacyl-tRNA synthetases"/>
    <property type="match status" value="1"/>
</dbReference>
<dbReference type="SUPFAM" id="SSF52374">
    <property type="entry name" value="Nucleotidylyl transferase"/>
    <property type="match status" value="1"/>
</dbReference>
<name>SYC_BRUSU</name>
<keyword id="KW-0030">Aminoacyl-tRNA synthetase</keyword>
<keyword id="KW-0067">ATP-binding</keyword>
<keyword id="KW-0963">Cytoplasm</keyword>
<keyword id="KW-0436">Ligase</keyword>
<keyword id="KW-0479">Metal-binding</keyword>
<keyword id="KW-0547">Nucleotide-binding</keyword>
<keyword id="KW-0648">Protein biosynthesis</keyword>
<keyword id="KW-0862">Zinc</keyword>
<comment type="catalytic activity">
    <reaction evidence="1">
        <text>tRNA(Cys) + L-cysteine + ATP = L-cysteinyl-tRNA(Cys) + AMP + diphosphate</text>
        <dbReference type="Rhea" id="RHEA:17773"/>
        <dbReference type="Rhea" id="RHEA-COMP:9661"/>
        <dbReference type="Rhea" id="RHEA-COMP:9679"/>
        <dbReference type="ChEBI" id="CHEBI:30616"/>
        <dbReference type="ChEBI" id="CHEBI:33019"/>
        <dbReference type="ChEBI" id="CHEBI:35235"/>
        <dbReference type="ChEBI" id="CHEBI:78442"/>
        <dbReference type="ChEBI" id="CHEBI:78517"/>
        <dbReference type="ChEBI" id="CHEBI:456215"/>
        <dbReference type="EC" id="6.1.1.16"/>
    </reaction>
</comment>
<comment type="cofactor">
    <cofactor evidence="1">
        <name>Zn(2+)</name>
        <dbReference type="ChEBI" id="CHEBI:29105"/>
    </cofactor>
    <text evidence="1">Binds 1 zinc ion per subunit.</text>
</comment>
<comment type="subunit">
    <text evidence="1">Monomer.</text>
</comment>
<comment type="subcellular location">
    <subcellularLocation>
        <location evidence="1">Cytoplasm</location>
    </subcellularLocation>
</comment>
<comment type="similarity">
    <text evidence="1">Belongs to the class-I aminoacyl-tRNA synthetase family.</text>
</comment>
<accession>Q8G1N5</accession>
<accession>G0K818</accession>
<gene>
    <name evidence="1" type="primary">cysS</name>
    <name type="ordered locus">BR0677</name>
    <name type="ordered locus">BS1330_I0673</name>
</gene>
<protein>
    <recommendedName>
        <fullName evidence="1">Cysteine--tRNA ligase</fullName>
        <ecNumber evidence="1">6.1.1.16</ecNumber>
    </recommendedName>
    <alternativeName>
        <fullName evidence="1">Cysteinyl-tRNA synthetase</fullName>
        <shortName evidence="1">CysRS</shortName>
    </alternativeName>
</protein>
<feature type="chain" id="PRO_0000159365" description="Cysteine--tRNA ligase">
    <location>
        <begin position="1"/>
        <end position="506"/>
    </location>
</feature>
<feature type="short sequence motif" description="'HIGH' region">
    <location>
        <begin position="36"/>
        <end position="46"/>
    </location>
</feature>
<feature type="short sequence motif" description="'KMSKS' region">
    <location>
        <begin position="302"/>
        <end position="306"/>
    </location>
</feature>
<feature type="binding site" evidence="1">
    <location>
        <position position="34"/>
    </location>
    <ligand>
        <name>Zn(2+)</name>
        <dbReference type="ChEBI" id="CHEBI:29105"/>
    </ligand>
</feature>
<feature type="binding site" evidence="1">
    <location>
        <position position="230"/>
    </location>
    <ligand>
        <name>Zn(2+)</name>
        <dbReference type="ChEBI" id="CHEBI:29105"/>
    </ligand>
</feature>
<feature type="binding site" evidence="1">
    <location>
        <position position="269"/>
    </location>
    <ligand>
        <name>Zn(2+)</name>
        <dbReference type="ChEBI" id="CHEBI:29105"/>
    </ligand>
</feature>
<feature type="binding site" evidence="1">
    <location>
        <position position="273"/>
    </location>
    <ligand>
        <name>Zn(2+)</name>
        <dbReference type="ChEBI" id="CHEBI:29105"/>
    </ligand>
</feature>
<feature type="binding site" evidence="1">
    <location>
        <position position="305"/>
    </location>
    <ligand>
        <name>ATP</name>
        <dbReference type="ChEBI" id="CHEBI:30616"/>
    </ligand>
</feature>